<reference key="1">
    <citation type="journal article" date="2005" name="Nature">
        <title>The map-based sequence of the rice genome.</title>
        <authorList>
            <consortium name="International rice genome sequencing project (IRGSP)"/>
        </authorList>
    </citation>
    <scope>NUCLEOTIDE SEQUENCE [LARGE SCALE GENOMIC DNA]</scope>
    <source>
        <strain>cv. Nipponbare</strain>
    </source>
</reference>
<reference key="2">
    <citation type="journal article" date="2008" name="Nucleic Acids Res.">
        <title>The rice annotation project database (RAP-DB): 2008 update.</title>
        <authorList>
            <consortium name="The rice annotation project (RAP)"/>
        </authorList>
    </citation>
    <scope>GENOME REANNOTATION</scope>
    <source>
        <strain>cv. Nipponbare</strain>
    </source>
</reference>
<reference key="3">
    <citation type="journal article" date="2013" name="Rice">
        <title>Improvement of the Oryza sativa Nipponbare reference genome using next generation sequence and optical map data.</title>
        <authorList>
            <person name="Kawahara Y."/>
            <person name="de la Bastide M."/>
            <person name="Hamilton J.P."/>
            <person name="Kanamori H."/>
            <person name="McCombie W.R."/>
            <person name="Ouyang S."/>
            <person name="Schwartz D.C."/>
            <person name="Tanaka T."/>
            <person name="Wu J."/>
            <person name="Zhou S."/>
            <person name="Childs K.L."/>
            <person name="Davidson R.M."/>
            <person name="Lin H."/>
            <person name="Quesada-Ocampo L."/>
            <person name="Vaillancourt B."/>
            <person name="Sakai H."/>
            <person name="Lee S.S."/>
            <person name="Kim J."/>
            <person name="Numa H."/>
            <person name="Itoh T."/>
            <person name="Buell C.R."/>
            <person name="Matsumoto T."/>
        </authorList>
    </citation>
    <scope>GENOME REANNOTATION</scope>
    <source>
        <strain>cv. Nipponbare</strain>
    </source>
</reference>
<reference key="4">
    <citation type="journal article" date="2005" name="PLoS Biol.">
        <title>The genomes of Oryza sativa: a history of duplications.</title>
        <authorList>
            <person name="Yu J."/>
            <person name="Wang J."/>
            <person name="Lin W."/>
            <person name="Li S."/>
            <person name="Li H."/>
            <person name="Zhou J."/>
            <person name="Ni P."/>
            <person name="Dong W."/>
            <person name="Hu S."/>
            <person name="Zeng C."/>
            <person name="Zhang J."/>
            <person name="Zhang Y."/>
            <person name="Li R."/>
            <person name="Xu Z."/>
            <person name="Li S."/>
            <person name="Li X."/>
            <person name="Zheng H."/>
            <person name="Cong L."/>
            <person name="Lin L."/>
            <person name="Yin J."/>
            <person name="Geng J."/>
            <person name="Li G."/>
            <person name="Shi J."/>
            <person name="Liu J."/>
            <person name="Lv H."/>
            <person name="Li J."/>
            <person name="Wang J."/>
            <person name="Deng Y."/>
            <person name="Ran L."/>
            <person name="Shi X."/>
            <person name="Wang X."/>
            <person name="Wu Q."/>
            <person name="Li C."/>
            <person name="Ren X."/>
            <person name="Wang J."/>
            <person name="Wang X."/>
            <person name="Li D."/>
            <person name="Liu D."/>
            <person name="Zhang X."/>
            <person name="Ji Z."/>
            <person name="Zhao W."/>
            <person name="Sun Y."/>
            <person name="Zhang Z."/>
            <person name="Bao J."/>
            <person name="Han Y."/>
            <person name="Dong L."/>
            <person name="Ji J."/>
            <person name="Chen P."/>
            <person name="Wu S."/>
            <person name="Liu J."/>
            <person name="Xiao Y."/>
            <person name="Bu D."/>
            <person name="Tan J."/>
            <person name="Yang L."/>
            <person name="Ye C."/>
            <person name="Zhang J."/>
            <person name="Xu J."/>
            <person name="Zhou Y."/>
            <person name="Yu Y."/>
            <person name="Zhang B."/>
            <person name="Zhuang S."/>
            <person name="Wei H."/>
            <person name="Liu B."/>
            <person name="Lei M."/>
            <person name="Yu H."/>
            <person name="Li Y."/>
            <person name="Xu H."/>
            <person name="Wei S."/>
            <person name="He X."/>
            <person name="Fang L."/>
            <person name="Zhang Z."/>
            <person name="Zhang Y."/>
            <person name="Huang X."/>
            <person name="Su Z."/>
            <person name="Tong W."/>
            <person name="Li J."/>
            <person name="Tong Z."/>
            <person name="Li S."/>
            <person name="Ye J."/>
            <person name="Wang L."/>
            <person name="Fang L."/>
            <person name="Lei T."/>
            <person name="Chen C.-S."/>
            <person name="Chen H.-C."/>
            <person name="Xu Z."/>
            <person name="Li H."/>
            <person name="Huang H."/>
            <person name="Zhang F."/>
            <person name="Xu H."/>
            <person name="Li N."/>
            <person name="Zhao C."/>
            <person name="Li S."/>
            <person name="Dong L."/>
            <person name="Huang Y."/>
            <person name="Li L."/>
            <person name="Xi Y."/>
            <person name="Qi Q."/>
            <person name="Li W."/>
            <person name="Zhang B."/>
            <person name="Hu W."/>
            <person name="Zhang Y."/>
            <person name="Tian X."/>
            <person name="Jiao Y."/>
            <person name="Liang X."/>
            <person name="Jin J."/>
            <person name="Gao L."/>
            <person name="Zheng W."/>
            <person name="Hao B."/>
            <person name="Liu S.-M."/>
            <person name="Wang W."/>
            <person name="Yuan L."/>
            <person name="Cao M."/>
            <person name="McDermott J."/>
            <person name="Samudrala R."/>
            <person name="Wang J."/>
            <person name="Wong G.K.-S."/>
            <person name="Yang H."/>
        </authorList>
    </citation>
    <scope>NUCLEOTIDE SEQUENCE [LARGE SCALE GENOMIC DNA]</scope>
    <source>
        <strain>cv. Nipponbare</strain>
    </source>
</reference>
<reference key="5">
    <citation type="submission" date="2007-09" db="EMBL/GenBank/DDBJ databases">
        <title>Oryza sativa full length cDNA.</title>
        <authorList>
            <consortium name="The rice full-length cDNA consortium"/>
        </authorList>
    </citation>
    <scope>NUCLEOTIDE SEQUENCE [LARGE SCALE MRNA] OF 280-479</scope>
    <source>
        <strain>cv. Nipponbare</strain>
    </source>
</reference>
<reference key="6">
    <citation type="journal article" date="2009" name="Planta">
        <title>Genome-wide identification of BURP domain-containing genes in rice reveals a gene family with diverse structures and responses to abiotic stresses.</title>
        <authorList>
            <person name="Ding X."/>
            <person name="Hou X."/>
            <person name="Xie K."/>
            <person name="Xiong L."/>
        </authorList>
    </citation>
    <scope>TISSUE SPECIFICITY</scope>
    <scope>GENE NOMENCLATURE</scope>
</reference>
<proteinExistence type="evidence at transcript level"/>
<organism>
    <name type="scientific">Oryza sativa subsp. japonica</name>
    <name type="common">Rice</name>
    <dbReference type="NCBI Taxonomy" id="39947"/>
    <lineage>
        <taxon>Eukaryota</taxon>
        <taxon>Viridiplantae</taxon>
        <taxon>Streptophyta</taxon>
        <taxon>Embryophyta</taxon>
        <taxon>Tracheophyta</taxon>
        <taxon>Spermatophyta</taxon>
        <taxon>Magnoliopsida</taxon>
        <taxon>Liliopsida</taxon>
        <taxon>Poales</taxon>
        <taxon>Poaceae</taxon>
        <taxon>BOP clade</taxon>
        <taxon>Oryzoideae</taxon>
        <taxon>Oryzeae</taxon>
        <taxon>Oryzinae</taxon>
        <taxon>Oryza</taxon>
        <taxon>Oryza sativa</taxon>
    </lineage>
</organism>
<accession>Q0E1Z0</accession>
<accession>Q6K8A3</accession>
<accession>Q6K8A4</accession>
<name>BURP4_ORYSJ</name>
<keyword id="KW-0325">Glycoprotein</keyword>
<keyword id="KW-1185">Reference proteome</keyword>
<keyword id="KW-0732">Signal</keyword>
<dbReference type="EMBL" id="AP004168">
    <property type="protein sequence ID" value="BAD21725.1"/>
    <property type="status" value="ALT_SEQ"/>
    <property type="molecule type" value="Genomic_DNA"/>
</dbReference>
<dbReference type="EMBL" id="AP004168">
    <property type="protein sequence ID" value="BAD21726.1"/>
    <property type="status" value="ALT_SEQ"/>
    <property type="molecule type" value="Genomic_DNA"/>
</dbReference>
<dbReference type="EMBL" id="AP008208">
    <property type="protein sequence ID" value="BAF08498.2"/>
    <property type="status" value="ALT_SEQ"/>
    <property type="molecule type" value="Genomic_DNA"/>
</dbReference>
<dbReference type="EMBL" id="AP014958">
    <property type="status" value="NOT_ANNOTATED_CDS"/>
    <property type="molecule type" value="Genomic_DNA"/>
</dbReference>
<dbReference type="EMBL" id="CM000139">
    <property type="protein sequence ID" value="EAZ22628.1"/>
    <property type="molecule type" value="Genomic_DNA"/>
</dbReference>
<dbReference type="EMBL" id="AK288416">
    <property type="status" value="NOT_ANNOTATED_CDS"/>
    <property type="molecule type" value="mRNA"/>
</dbReference>
<dbReference type="RefSeq" id="XP_015624887.1">
    <property type="nucleotide sequence ID" value="XM_015769401.1"/>
</dbReference>
<dbReference type="STRING" id="39947.Q0E1Z0"/>
<dbReference type="GlyCosmos" id="Q0E1Z0">
    <property type="glycosylation" value="1 site, No reported glycans"/>
</dbReference>
<dbReference type="PaxDb" id="39947-Q0E1Z0"/>
<dbReference type="KEGG" id="dosa:Os02g0288600"/>
<dbReference type="eggNOG" id="ENOG502QQHP">
    <property type="taxonomic scope" value="Eukaryota"/>
</dbReference>
<dbReference type="HOGENOM" id="CLU_011822_2_1_1"/>
<dbReference type="InParanoid" id="Q0E1Z0"/>
<dbReference type="OrthoDB" id="989869at2759"/>
<dbReference type="Proteomes" id="UP000000763">
    <property type="component" value="Chromosome 2"/>
</dbReference>
<dbReference type="Proteomes" id="UP000007752">
    <property type="component" value="Chromosome 2"/>
</dbReference>
<dbReference type="Proteomes" id="UP000059680">
    <property type="component" value="Chromosome 2"/>
</dbReference>
<dbReference type="InterPro" id="IPR044816">
    <property type="entry name" value="BURP"/>
</dbReference>
<dbReference type="InterPro" id="IPR004873">
    <property type="entry name" value="BURP_dom"/>
</dbReference>
<dbReference type="PANTHER" id="PTHR31236">
    <property type="entry name" value="BURP DOMAIN PROTEIN USPL1-LIKE"/>
    <property type="match status" value="1"/>
</dbReference>
<dbReference type="PANTHER" id="PTHR31236:SF27">
    <property type="entry name" value="BURP DOMAIN-CONTAINING PROTEIN 4"/>
    <property type="match status" value="1"/>
</dbReference>
<dbReference type="Pfam" id="PF03181">
    <property type="entry name" value="BURP"/>
    <property type="match status" value="1"/>
</dbReference>
<dbReference type="SMART" id="SM01045">
    <property type="entry name" value="BURP"/>
    <property type="match status" value="1"/>
</dbReference>
<dbReference type="PROSITE" id="PS51277">
    <property type="entry name" value="BURP"/>
    <property type="match status" value="1"/>
</dbReference>
<comment type="tissue specificity">
    <text evidence="4">Expressed in stamen.</text>
</comment>
<comment type="sequence caution" evidence="5">
    <conflict type="erroneous gene model prediction">
        <sequence resource="EMBL-CDS" id="BAD21725"/>
    </conflict>
</comment>
<comment type="sequence caution" evidence="5">
    <conflict type="erroneous gene model prediction">
        <sequence resource="EMBL-CDS" id="BAD21726"/>
    </conflict>
</comment>
<comment type="sequence caution" evidence="5">
    <conflict type="erroneous gene model prediction">
        <sequence resource="EMBL-CDS" id="BAF08498"/>
    </conflict>
</comment>
<sequence>MVGKGNECAAARRRFSLRAAAASSSSSSFLPCLLLAAALSAGCCRAHAATARAPRSLLARFPTTKMTSELEKEAGRYVDDSSQAARTNNKITNLQVSFVGHGHDTPADGEGQFADAAYPAKWKPDQDPSTPSLVVAHHLPNGNAPFIDAAYPVKWSPRADGPPKQPATFPASPNGEKAEFTDSAYSVKWSPRSVAPPKAPGIFAQHSNGNKAQFTDAAYPVDWNPRSVAPPTPPAALSSLAHPAAGIHIQRGMLFLMKKLHPGAVLPEGTKLALPHGDHGVAAAAPRFIYKDKGDAVPFDLRAMDAILAMFGILPGSDKAAQVADTLRACSELTAAGGGGEEPRACCATSREAVLDFAASALGTSAPRAVTTLVHGREPRRYVVAADGVARIGGDAVVACHPMPYLYEVYYCHRPADAVALRVDLHAVADVGLGGATAVAVCHVNTTTWDSAYFELLKASRGDAICHYMPQGYVLWLAN</sequence>
<protein>
    <recommendedName>
        <fullName>BURP domain-containing protein 4</fullName>
        <shortName>OsBURP04</shortName>
    </recommendedName>
</protein>
<feature type="signal peptide" evidence="1">
    <location>
        <begin position="1"/>
        <end position="46"/>
    </location>
</feature>
<feature type="chain" id="PRO_0000375831" description="BURP domain-containing protein 4">
    <location>
        <begin position="47"/>
        <end position="479"/>
    </location>
</feature>
<feature type="domain" description="BURP" evidence="2">
    <location>
        <begin position="254"/>
        <end position="479"/>
    </location>
</feature>
<feature type="region of interest" description="Disordered" evidence="3">
    <location>
        <begin position="158"/>
        <end position="177"/>
    </location>
</feature>
<feature type="glycosylation site" description="N-linked (GlcNAc...) asparagine" evidence="1">
    <location>
        <position position="445"/>
    </location>
</feature>
<gene>
    <name type="primary">BURP4</name>
    <name type="ordered locus">Os02g0288600</name>
    <name type="ordered locus">LOC_Os02g18690</name>
    <name type="ORF">OJ1756_H07.37</name>
    <name type="ORF">OJ1756_H07.38</name>
    <name type="ORF">OsJ_06300</name>
</gene>
<evidence type="ECO:0000255" key="1"/>
<evidence type="ECO:0000255" key="2">
    <source>
        <dbReference type="PROSITE-ProRule" id="PRU00604"/>
    </source>
</evidence>
<evidence type="ECO:0000256" key="3">
    <source>
        <dbReference type="SAM" id="MobiDB-lite"/>
    </source>
</evidence>
<evidence type="ECO:0000269" key="4">
    <source>
    </source>
</evidence>
<evidence type="ECO:0000305" key="5"/>